<accession>Q3JUB3</accession>
<gene>
    <name evidence="1" type="primary">pnp</name>
    <name type="ordered locus">BURPS1710b_1430</name>
</gene>
<dbReference type="EC" id="2.7.7.8" evidence="1"/>
<dbReference type="EMBL" id="CP000124">
    <property type="protein sequence ID" value="ABA49168.1"/>
    <property type="molecule type" value="Genomic_DNA"/>
</dbReference>
<dbReference type="RefSeq" id="WP_004526459.1">
    <property type="nucleotide sequence ID" value="NC_007434.1"/>
</dbReference>
<dbReference type="SMR" id="Q3JUB3"/>
<dbReference type="EnsemblBacteria" id="ABA49168">
    <property type="protein sequence ID" value="ABA49168"/>
    <property type="gene ID" value="BURPS1710b_1430"/>
</dbReference>
<dbReference type="GeneID" id="93059689"/>
<dbReference type="KEGG" id="bpm:BURPS1710b_1430"/>
<dbReference type="HOGENOM" id="CLU_004217_2_2_4"/>
<dbReference type="Proteomes" id="UP000002700">
    <property type="component" value="Chromosome I"/>
</dbReference>
<dbReference type="GO" id="GO:0005829">
    <property type="term" value="C:cytosol"/>
    <property type="evidence" value="ECO:0007669"/>
    <property type="project" value="TreeGrafter"/>
</dbReference>
<dbReference type="GO" id="GO:0000175">
    <property type="term" value="F:3'-5'-RNA exonuclease activity"/>
    <property type="evidence" value="ECO:0007669"/>
    <property type="project" value="TreeGrafter"/>
</dbReference>
<dbReference type="GO" id="GO:0000287">
    <property type="term" value="F:magnesium ion binding"/>
    <property type="evidence" value="ECO:0007669"/>
    <property type="project" value="UniProtKB-UniRule"/>
</dbReference>
<dbReference type="GO" id="GO:0004654">
    <property type="term" value="F:polyribonucleotide nucleotidyltransferase activity"/>
    <property type="evidence" value="ECO:0007669"/>
    <property type="project" value="UniProtKB-UniRule"/>
</dbReference>
<dbReference type="GO" id="GO:0003723">
    <property type="term" value="F:RNA binding"/>
    <property type="evidence" value="ECO:0007669"/>
    <property type="project" value="UniProtKB-UniRule"/>
</dbReference>
<dbReference type="GO" id="GO:0006402">
    <property type="term" value="P:mRNA catabolic process"/>
    <property type="evidence" value="ECO:0007669"/>
    <property type="project" value="UniProtKB-UniRule"/>
</dbReference>
<dbReference type="GO" id="GO:0006396">
    <property type="term" value="P:RNA processing"/>
    <property type="evidence" value="ECO:0007669"/>
    <property type="project" value="InterPro"/>
</dbReference>
<dbReference type="CDD" id="cd02393">
    <property type="entry name" value="KH-I_PNPase"/>
    <property type="match status" value="1"/>
</dbReference>
<dbReference type="CDD" id="cd11363">
    <property type="entry name" value="RNase_PH_PNPase_1"/>
    <property type="match status" value="1"/>
</dbReference>
<dbReference type="CDD" id="cd11364">
    <property type="entry name" value="RNase_PH_PNPase_2"/>
    <property type="match status" value="1"/>
</dbReference>
<dbReference type="CDD" id="cd04472">
    <property type="entry name" value="S1_PNPase"/>
    <property type="match status" value="1"/>
</dbReference>
<dbReference type="FunFam" id="3.30.1370.10:FF:000001">
    <property type="entry name" value="Polyribonucleotide nucleotidyltransferase"/>
    <property type="match status" value="1"/>
</dbReference>
<dbReference type="FunFam" id="3.30.230.70:FF:000001">
    <property type="entry name" value="Polyribonucleotide nucleotidyltransferase"/>
    <property type="match status" value="1"/>
</dbReference>
<dbReference type="FunFam" id="3.30.230.70:FF:000002">
    <property type="entry name" value="Polyribonucleotide nucleotidyltransferase"/>
    <property type="match status" value="1"/>
</dbReference>
<dbReference type="FunFam" id="2.40.50.140:FF:000189">
    <property type="entry name" value="Polyribonucleotide nucleotidyltransferase, putative"/>
    <property type="match status" value="1"/>
</dbReference>
<dbReference type="Gene3D" id="3.30.230.70">
    <property type="entry name" value="GHMP Kinase, N-terminal domain"/>
    <property type="match status" value="2"/>
</dbReference>
<dbReference type="Gene3D" id="3.30.1370.10">
    <property type="entry name" value="K Homology domain, type 1"/>
    <property type="match status" value="1"/>
</dbReference>
<dbReference type="Gene3D" id="2.40.50.140">
    <property type="entry name" value="Nucleic acid-binding proteins"/>
    <property type="match status" value="1"/>
</dbReference>
<dbReference type="HAMAP" id="MF_01595">
    <property type="entry name" value="PNPase"/>
    <property type="match status" value="1"/>
</dbReference>
<dbReference type="InterPro" id="IPR001247">
    <property type="entry name" value="ExoRNase_PH_dom1"/>
</dbReference>
<dbReference type="InterPro" id="IPR015847">
    <property type="entry name" value="ExoRNase_PH_dom2"/>
</dbReference>
<dbReference type="InterPro" id="IPR036345">
    <property type="entry name" value="ExoRNase_PH_dom2_sf"/>
</dbReference>
<dbReference type="InterPro" id="IPR004087">
    <property type="entry name" value="KH_dom"/>
</dbReference>
<dbReference type="InterPro" id="IPR004088">
    <property type="entry name" value="KH_dom_type_1"/>
</dbReference>
<dbReference type="InterPro" id="IPR036612">
    <property type="entry name" value="KH_dom_type_1_sf"/>
</dbReference>
<dbReference type="InterPro" id="IPR012340">
    <property type="entry name" value="NA-bd_OB-fold"/>
</dbReference>
<dbReference type="InterPro" id="IPR012162">
    <property type="entry name" value="PNPase"/>
</dbReference>
<dbReference type="InterPro" id="IPR027408">
    <property type="entry name" value="PNPase/RNase_PH_dom_sf"/>
</dbReference>
<dbReference type="InterPro" id="IPR015848">
    <property type="entry name" value="PNPase_PH_RNA-bd_bac/org-type"/>
</dbReference>
<dbReference type="InterPro" id="IPR036456">
    <property type="entry name" value="PNPase_PH_RNA-bd_sf"/>
</dbReference>
<dbReference type="InterPro" id="IPR020568">
    <property type="entry name" value="Ribosomal_Su5_D2-typ_SF"/>
</dbReference>
<dbReference type="InterPro" id="IPR003029">
    <property type="entry name" value="S1_domain"/>
</dbReference>
<dbReference type="NCBIfam" id="TIGR03591">
    <property type="entry name" value="polynuc_phos"/>
    <property type="match status" value="1"/>
</dbReference>
<dbReference type="NCBIfam" id="NF008805">
    <property type="entry name" value="PRK11824.1"/>
    <property type="match status" value="1"/>
</dbReference>
<dbReference type="PANTHER" id="PTHR11252">
    <property type="entry name" value="POLYRIBONUCLEOTIDE NUCLEOTIDYLTRANSFERASE"/>
    <property type="match status" value="1"/>
</dbReference>
<dbReference type="PANTHER" id="PTHR11252:SF0">
    <property type="entry name" value="POLYRIBONUCLEOTIDE NUCLEOTIDYLTRANSFERASE 1, MITOCHONDRIAL"/>
    <property type="match status" value="1"/>
</dbReference>
<dbReference type="Pfam" id="PF00013">
    <property type="entry name" value="KH_1"/>
    <property type="match status" value="1"/>
</dbReference>
<dbReference type="Pfam" id="PF03726">
    <property type="entry name" value="PNPase"/>
    <property type="match status" value="1"/>
</dbReference>
<dbReference type="Pfam" id="PF01138">
    <property type="entry name" value="RNase_PH"/>
    <property type="match status" value="2"/>
</dbReference>
<dbReference type="Pfam" id="PF03725">
    <property type="entry name" value="RNase_PH_C"/>
    <property type="match status" value="2"/>
</dbReference>
<dbReference type="Pfam" id="PF00575">
    <property type="entry name" value="S1"/>
    <property type="match status" value="1"/>
</dbReference>
<dbReference type="PIRSF" id="PIRSF005499">
    <property type="entry name" value="PNPase"/>
    <property type="match status" value="1"/>
</dbReference>
<dbReference type="SMART" id="SM00322">
    <property type="entry name" value="KH"/>
    <property type="match status" value="1"/>
</dbReference>
<dbReference type="SMART" id="SM00316">
    <property type="entry name" value="S1"/>
    <property type="match status" value="1"/>
</dbReference>
<dbReference type="SUPFAM" id="SSF54791">
    <property type="entry name" value="Eukaryotic type KH-domain (KH-domain type I)"/>
    <property type="match status" value="1"/>
</dbReference>
<dbReference type="SUPFAM" id="SSF50249">
    <property type="entry name" value="Nucleic acid-binding proteins"/>
    <property type="match status" value="1"/>
</dbReference>
<dbReference type="SUPFAM" id="SSF46915">
    <property type="entry name" value="Polynucleotide phosphorylase/guanosine pentaphosphate synthase (PNPase/GPSI), domain 3"/>
    <property type="match status" value="1"/>
</dbReference>
<dbReference type="SUPFAM" id="SSF55666">
    <property type="entry name" value="Ribonuclease PH domain 2-like"/>
    <property type="match status" value="2"/>
</dbReference>
<dbReference type="SUPFAM" id="SSF54211">
    <property type="entry name" value="Ribosomal protein S5 domain 2-like"/>
    <property type="match status" value="2"/>
</dbReference>
<dbReference type="PROSITE" id="PS50084">
    <property type="entry name" value="KH_TYPE_1"/>
    <property type="match status" value="1"/>
</dbReference>
<dbReference type="PROSITE" id="PS50126">
    <property type="entry name" value="S1"/>
    <property type="match status" value="1"/>
</dbReference>
<feature type="chain" id="PRO_0000329560" description="Polyribonucleotide nucleotidyltransferase">
    <location>
        <begin position="1"/>
        <end position="713"/>
    </location>
</feature>
<feature type="domain" description="KH" evidence="1">
    <location>
        <begin position="560"/>
        <end position="619"/>
    </location>
</feature>
<feature type="domain" description="S1 motif" evidence="1">
    <location>
        <begin position="629"/>
        <end position="697"/>
    </location>
</feature>
<feature type="binding site" evidence="1">
    <location>
        <position position="493"/>
    </location>
    <ligand>
        <name>Mg(2+)</name>
        <dbReference type="ChEBI" id="CHEBI:18420"/>
    </ligand>
</feature>
<feature type="binding site" evidence="1">
    <location>
        <position position="499"/>
    </location>
    <ligand>
        <name>Mg(2+)</name>
        <dbReference type="ChEBI" id="CHEBI:18420"/>
    </ligand>
</feature>
<comment type="function">
    <text evidence="1">Involved in mRNA degradation. Catalyzes the phosphorolysis of single-stranded polyribonucleotides processively in the 3'- to 5'-direction.</text>
</comment>
<comment type="catalytic activity">
    <reaction evidence="1">
        <text>RNA(n+1) + phosphate = RNA(n) + a ribonucleoside 5'-diphosphate</text>
        <dbReference type="Rhea" id="RHEA:22096"/>
        <dbReference type="Rhea" id="RHEA-COMP:14527"/>
        <dbReference type="Rhea" id="RHEA-COMP:17342"/>
        <dbReference type="ChEBI" id="CHEBI:43474"/>
        <dbReference type="ChEBI" id="CHEBI:57930"/>
        <dbReference type="ChEBI" id="CHEBI:140395"/>
        <dbReference type="EC" id="2.7.7.8"/>
    </reaction>
</comment>
<comment type="cofactor">
    <cofactor evidence="1">
        <name>Mg(2+)</name>
        <dbReference type="ChEBI" id="CHEBI:18420"/>
    </cofactor>
</comment>
<comment type="subcellular location">
    <subcellularLocation>
        <location evidence="1">Cytoplasm</location>
    </subcellularLocation>
</comment>
<comment type="similarity">
    <text evidence="1">Belongs to the polyribonucleotide nucleotidyltransferase family.</text>
</comment>
<name>PNP_BURP1</name>
<reference key="1">
    <citation type="journal article" date="2010" name="Genome Biol. Evol.">
        <title>Continuing evolution of Burkholderia mallei through genome reduction and large-scale rearrangements.</title>
        <authorList>
            <person name="Losada L."/>
            <person name="Ronning C.M."/>
            <person name="DeShazer D."/>
            <person name="Woods D."/>
            <person name="Fedorova N."/>
            <person name="Kim H.S."/>
            <person name="Shabalina S.A."/>
            <person name="Pearson T.R."/>
            <person name="Brinkac L."/>
            <person name="Tan P."/>
            <person name="Nandi T."/>
            <person name="Crabtree J."/>
            <person name="Badger J."/>
            <person name="Beckstrom-Sternberg S."/>
            <person name="Saqib M."/>
            <person name="Schutzer S.E."/>
            <person name="Keim P."/>
            <person name="Nierman W.C."/>
        </authorList>
    </citation>
    <scope>NUCLEOTIDE SEQUENCE [LARGE SCALE GENOMIC DNA]</scope>
    <source>
        <strain>1710b</strain>
    </source>
</reference>
<sequence length="713" mass="76990">MSLFNKIVKEFQWGQHKVRLETGEIARQASGAVIVDIEDTVVLATVVGAKSAKPGQDFFPLTVDYIEKTYSAGKIPGGFFRREGRPSEHETLTSRLIDRPLRPLFPEGFYNEVQVVIHVLSVNPEIPADIPALIGASAALAVSGLPFNGPVGAARVAYVNNEYVLNPTREQIKASRLDLVVAGTERAVLMVESEADQLPEDVMLGAVVFGHEQMQTAIDAIHELVREGGKPEWDWQPAPKDEALNARVTELAQPELLAAYQIRDKQARSTKLKEVYAATSAKLEEEAVAAGTVAADKATVGNILFDLEAKIVRGQILNGEPRIDGRDTRTVRPIEIRTGVLPRTHGSALFTRGETQALVVATLGTKGDEQIIDALEGEYRERFMLHYNMPPFATGETGRVGSPKRREIGHGRLAKRALVACLPSADEFGYSIRVVSEITESNGSSSMASVCGGCLALMDAGVPMKAHVAGIAMGLILEGNKFAVLTDILGDEDHLGDMDFKVAGTADGVTALQMDIKIQGITKEIMQVALAQAKEGRMHILGKMKDAVAGANTQLSEFAPRMITIKINPEKIRDVIGKGGSVIRALTEETGTTIDISDDGVVTIASTNSEGMAEAKKRIENITAEIEVGHVYEGTVLKLLDFGAIVNLLPGKDGLLHISEIVNERVKDINDYLKEGQQVKVKVIQTDEKGRVRLSAKALLNEAAAQADTPPQQ</sequence>
<protein>
    <recommendedName>
        <fullName evidence="1">Polyribonucleotide nucleotidyltransferase</fullName>
        <ecNumber evidence="1">2.7.7.8</ecNumber>
    </recommendedName>
    <alternativeName>
        <fullName evidence="1">Polynucleotide phosphorylase</fullName>
        <shortName evidence="1">PNPase</shortName>
    </alternativeName>
</protein>
<organism>
    <name type="scientific">Burkholderia pseudomallei (strain 1710b)</name>
    <dbReference type="NCBI Taxonomy" id="320372"/>
    <lineage>
        <taxon>Bacteria</taxon>
        <taxon>Pseudomonadati</taxon>
        <taxon>Pseudomonadota</taxon>
        <taxon>Betaproteobacteria</taxon>
        <taxon>Burkholderiales</taxon>
        <taxon>Burkholderiaceae</taxon>
        <taxon>Burkholderia</taxon>
        <taxon>pseudomallei group</taxon>
    </lineage>
</organism>
<evidence type="ECO:0000255" key="1">
    <source>
        <dbReference type="HAMAP-Rule" id="MF_01595"/>
    </source>
</evidence>
<keyword id="KW-0963">Cytoplasm</keyword>
<keyword id="KW-0460">Magnesium</keyword>
<keyword id="KW-0479">Metal-binding</keyword>
<keyword id="KW-0548">Nucleotidyltransferase</keyword>
<keyword id="KW-0694">RNA-binding</keyword>
<keyword id="KW-0808">Transferase</keyword>
<proteinExistence type="inferred from homology"/>